<protein>
    <recommendedName>
        <fullName evidence="3">Large ribosomal subunit protein uL13</fullName>
    </recommendedName>
    <alternativeName>
        <fullName>60S ribosomal protein L13a</fullName>
    </alternativeName>
</protein>
<evidence type="ECO:0000250" key="1">
    <source>
        <dbReference type="UniProtKB" id="P19253"/>
    </source>
</evidence>
<evidence type="ECO:0000250" key="2">
    <source>
        <dbReference type="UniProtKB" id="P40429"/>
    </source>
</evidence>
<evidence type="ECO:0000305" key="3"/>
<keyword id="KW-0002">3D-structure</keyword>
<keyword id="KW-0007">Acetylation</keyword>
<keyword id="KW-0164">Citrullination</keyword>
<keyword id="KW-0963">Cytoplasm</keyword>
<keyword id="KW-0597">Phosphoprotein</keyword>
<keyword id="KW-1185">Reference proteome</keyword>
<keyword id="KW-0687">Ribonucleoprotein</keyword>
<keyword id="KW-0689">Ribosomal protein</keyword>
<keyword id="KW-0810">Translation regulation</keyword>
<organism>
    <name type="scientific">Canis lupus familiaris</name>
    <name type="common">Dog</name>
    <name type="synonym">Canis familiaris</name>
    <dbReference type="NCBI Taxonomy" id="9615"/>
    <lineage>
        <taxon>Eukaryota</taxon>
        <taxon>Metazoa</taxon>
        <taxon>Chordata</taxon>
        <taxon>Craniata</taxon>
        <taxon>Vertebrata</taxon>
        <taxon>Euteleostomi</taxon>
        <taxon>Mammalia</taxon>
        <taxon>Eutheria</taxon>
        <taxon>Laurasiatheria</taxon>
        <taxon>Carnivora</taxon>
        <taxon>Caniformia</taxon>
        <taxon>Canidae</taxon>
        <taxon>Canis</taxon>
    </lineage>
</organism>
<sequence>MAEGQVLVLDGRGHLLGRLAAIVAKQVLLGRKVVVVRCEGINISGNFYRNKLNYLAFLRKRMNTNPSRGPYDFRAPSRIFWRTVRGMLPHKTKRGQAALDRLKVFDGIPPPYDKKKRMVVPAALKVVRLKPTRKFAYLGRLAHEVGWKYQAVTATLEEKRKEKAKIHYRKKKQLMRLRKQAEKNVEKKIDKYTEVLKTHGLLV</sequence>
<feature type="initiator methionine" description="Removed" evidence="2">
    <location>
        <position position="1"/>
    </location>
</feature>
<feature type="chain" id="PRO_0000405587" description="Large ribosomal subunit protein uL13">
    <location>
        <begin position="2"/>
        <end position="203"/>
    </location>
</feature>
<feature type="modified residue" description="N-acetylalanine" evidence="2">
    <location>
        <position position="2"/>
    </location>
</feature>
<feature type="modified residue" description="Citrulline" evidence="1">
    <location>
        <position position="59"/>
    </location>
</feature>
<feature type="modified residue" description="Phosphoserine" evidence="2">
    <location>
        <position position="77"/>
    </location>
</feature>
<feature type="modified residue" description="Citrulline" evidence="1">
    <location>
        <position position="140"/>
    </location>
</feature>
<feature type="modified residue" description="N6-acetyllysine" evidence="2">
    <location>
        <position position="191"/>
    </location>
</feature>
<comment type="function">
    <text evidence="2">Associated with ribosomes but is not required for canonical ribosome function and has extra-ribosomal functions. Component of the GAIT (gamma interferon-activated inhibitor of translation) complex which mediates interferon-gamma-induced transcript-selective translation inhibition in inflammation processes. Upon interferon-gamma activation and subsequent phosphorylation dissociates from the ribosome and assembles into the GAIT complex which binds to stem loop-containing GAIT elements in the 3'-UTR of diverse inflammatory mRNAs (such as ceruplasmin) and suppresses their translation. In the GAIT complex interacts with m7G cap-bound eIF4G at or near the eIF3-binding site and blocks the recruitment of the 43S ribosomal complex. Involved in methylation of rRNA.</text>
</comment>
<comment type="subunit">
    <text evidence="2">Component of the 60S ribosome. Component of the GAIT complex. Interacts with EIF4G1.</text>
</comment>
<comment type="subcellular location">
    <subcellularLocation>
        <location evidence="2">Cytoplasm</location>
    </subcellularLocation>
</comment>
<comment type="PTM">
    <text evidence="1">Phosphorylation at Ser-77 upon interferon-gamma treatment in macrophages involves a DAPK1-DAPK3 kinase cascade and is causing release from the ribosome, association with the GAIT complex and subsequent involvement in transcript-selective translation inhibition.</text>
</comment>
<comment type="PTM">
    <text evidence="1">Citrullinated by PADI4.</text>
</comment>
<comment type="similarity">
    <text evidence="3">Belongs to the universal ribosomal protein uL13 family.</text>
</comment>
<accession>Q9XSU0</accession>
<proteinExistence type="evidence at protein level"/>
<dbReference type="EMBL" id="DN325227">
    <property type="status" value="NOT_ANNOTATED_CDS"/>
    <property type="molecule type" value="mRNA"/>
</dbReference>
<dbReference type="EMBL" id="AJ388525">
    <property type="protein sequence ID" value="CAB46827.1"/>
    <property type="molecule type" value="mRNA"/>
</dbReference>
<dbReference type="EMBL" id="CO660712">
    <property type="status" value="NOT_ANNOTATED_CDS"/>
    <property type="molecule type" value="mRNA"/>
</dbReference>
<dbReference type="PDB" id="4V5Z">
    <property type="method" value="EM"/>
    <property type="resolution" value="8.70 A"/>
    <property type="chains" value="j=1-203"/>
</dbReference>
<dbReference type="PDBsum" id="4V5Z"/>
<dbReference type="SMR" id="Q9XSU0"/>
<dbReference type="FunCoup" id="Q9XSU0">
    <property type="interactions" value="1501"/>
</dbReference>
<dbReference type="STRING" id="9615.ENSCAFP00000005417"/>
<dbReference type="PaxDb" id="9612-ENSCAFP00000005417"/>
<dbReference type="eggNOG" id="KOG3204">
    <property type="taxonomic scope" value="Eukaryota"/>
</dbReference>
<dbReference type="InParanoid" id="Q9XSU0"/>
<dbReference type="Proteomes" id="UP000002254">
    <property type="component" value="Unplaced"/>
</dbReference>
<dbReference type="Proteomes" id="UP000694429">
    <property type="component" value="Unplaced"/>
</dbReference>
<dbReference type="Proteomes" id="UP000694542">
    <property type="component" value="Unplaced"/>
</dbReference>
<dbReference type="Proteomes" id="UP000805418">
    <property type="component" value="Unplaced"/>
</dbReference>
<dbReference type="GO" id="GO:0022625">
    <property type="term" value="C:cytosolic large ribosomal subunit"/>
    <property type="evidence" value="ECO:0000318"/>
    <property type="project" value="GO_Central"/>
</dbReference>
<dbReference type="GO" id="GO:0097452">
    <property type="term" value="C:GAIT complex"/>
    <property type="evidence" value="ECO:0000250"/>
    <property type="project" value="UniProtKB"/>
</dbReference>
<dbReference type="GO" id="GO:0005840">
    <property type="term" value="C:ribosome"/>
    <property type="evidence" value="ECO:0000318"/>
    <property type="project" value="GO_Central"/>
</dbReference>
<dbReference type="GO" id="GO:0003729">
    <property type="term" value="F:mRNA binding"/>
    <property type="evidence" value="ECO:0000318"/>
    <property type="project" value="GO_Central"/>
</dbReference>
<dbReference type="GO" id="GO:0003735">
    <property type="term" value="F:structural constituent of ribosome"/>
    <property type="evidence" value="ECO:0000318"/>
    <property type="project" value="GO_Central"/>
</dbReference>
<dbReference type="GO" id="GO:1901194">
    <property type="term" value="P:negative regulation of formation of translation preinitiation complex"/>
    <property type="evidence" value="ECO:0000250"/>
    <property type="project" value="UniProtKB"/>
</dbReference>
<dbReference type="GO" id="GO:0017148">
    <property type="term" value="P:negative regulation of translation"/>
    <property type="evidence" value="ECO:0000250"/>
    <property type="project" value="UniProtKB"/>
</dbReference>
<dbReference type="GO" id="GO:0006412">
    <property type="term" value="P:translation"/>
    <property type="evidence" value="ECO:0007669"/>
    <property type="project" value="InterPro"/>
</dbReference>
<dbReference type="CDD" id="cd00392">
    <property type="entry name" value="Ribosomal_L13"/>
    <property type="match status" value="1"/>
</dbReference>
<dbReference type="FunFam" id="6.10.250.3250:FF:000001">
    <property type="entry name" value="60S ribosomal protein L13a"/>
    <property type="match status" value="1"/>
</dbReference>
<dbReference type="FunFam" id="3.90.1180.10:FF:000002">
    <property type="entry name" value="60S ribosomal protein L16"/>
    <property type="match status" value="1"/>
</dbReference>
<dbReference type="Gene3D" id="6.10.250.3250">
    <property type="match status" value="1"/>
</dbReference>
<dbReference type="Gene3D" id="3.90.1180.10">
    <property type="entry name" value="Ribosomal protein L13"/>
    <property type="match status" value="1"/>
</dbReference>
<dbReference type="HAMAP" id="MF_01366">
    <property type="entry name" value="Ribosomal_uL13"/>
    <property type="match status" value="1"/>
</dbReference>
<dbReference type="InterPro" id="IPR005822">
    <property type="entry name" value="Ribosomal_uL13"/>
</dbReference>
<dbReference type="InterPro" id="IPR023563">
    <property type="entry name" value="Ribosomal_uL13_CS"/>
</dbReference>
<dbReference type="InterPro" id="IPR005755">
    <property type="entry name" value="Ribosomal_uL13_euk/arc"/>
</dbReference>
<dbReference type="InterPro" id="IPR036899">
    <property type="entry name" value="Ribosomal_uL13_sf"/>
</dbReference>
<dbReference type="NCBIfam" id="TIGR01077">
    <property type="entry name" value="L13_A_E"/>
    <property type="match status" value="1"/>
</dbReference>
<dbReference type="PANTHER" id="PTHR11545:SF3">
    <property type="entry name" value="LARGE RIBOSOMAL SUBUNIT PROTEIN UL13"/>
    <property type="match status" value="1"/>
</dbReference>
<dbReference type="PANTHER" id="PTHR11545">
    <property type="entry name" value="RIBOSOMAL PROTEIN L13"/>
    <property type="match status" value="1"/>
</dbReference>
<dbReference type="Pfam" id="PF00572">
    <property type="entry name" value="Ribosomal_L13"/>
    <property type="match status" value="1"/>
</dbReference>
<dbReference type="SUPFAM" id="SSF52161">
    <property type="entry name" value="Ribosomal protein L13"/>
    <property type="match status" value="1"/>
</dbReference>
<dbReference type="PROSITE" id="PS00783">
    <property type="entry name" value="RIBOSOMAL_L13"/>
    <property type="match status" value="1"/>
</dbReference>
<reference key="1">
    <citation type="submission" date="2005-03" db="EMBL/GenBank/DDBJ databases">
        <authorList>
            <person name="Staten N.R."/>
        </authorList>
    </citation>
    <scope>NUCLEOTIDE SEQUENCE [MRNA] OF 1-129</scope>
    <source>
        <strain>Beagle</strain>
        <tissue>Pancreas</tissue>
    </source>
</reference>
<reference key="2">
    <citation type="journal article" date="2000" name="Anal. Biochem.">
        <title>A method for the large-scale cloning of nuclear proteins and nuclear targeting sequences on a functional basis.</title>
        <authorList>
            <person name="Pichon B."/>
            <person name="Mercan D."/>
            <person name="Pouillon V."/>
            <person name="Christophe-Hobertus C."/>
            <person name="Christophe D."/>
        </authorList>
    </citation>
    <scope>NUCLEOTIDE SEQUENCE [MRNA] OF 2-143</scope>
    <source>
        <tissue>Thyroid</tissue>
    </source>
</reference>
<reference key="3">
    <citation type="submission" date="2004-07" db="EMBL/GenBank/DDBJ databases">
        <title>Dog arrayTAG cDNA clone collection.</title>
        <authorList>
            <person name="Schlueter T."/>
            <person name="Hermanns J."/>
            <person name="Weindel M."/>
            <person name="Schuette D."/>
            <person name="Kranz H."/>
            <person name="Henrich J."/>
            <person name="Loebbert R."/>
        </authorList>
    </citation>
    <scope>NUCLEOTIDE SEQUENCE [MRNA] OF 16-203</scope>
    <source>
        <strain>Beagle</strain>
        <tissue>Jejunum</tissue>
    </source>
</reference>
<reference key="4">
    <citation type="journal article" date="2008" name="Structure">
        <title>Structure of the mammalian 80S ribosome at 8.7 A resolution.</title>
        <authorList>
            <person name="Chandramouli P."/>
            <person name="Topf M."/>
            <person name="Menetret J.F."/>
            <person name="Eswar N."/>
            <person name="Cannone J.J."/>
            <person name="Gutell R.R."/>
            <person name="Sali A."/>
            <person name="Akey C.W."/>
        </authorList>
    </citation>
    <scope>STRUCTURE BY ELECTRON MICROSCOPY (8.70 ANGSTROMS)</scope>
</reference>
<name>RL13A_CANLF</name>
<gene>
    <name type="primary">RPL13A</name>
</gene>